<dbReference type="EC" id="2.4.2.-" evidence="1"/>
<dbReference type="EC" id="2.4.2.22" evidence="1"/>
<dbReference type="EMBL" id="CP000577">
    <property type="protein sequence ID" value="ABN76128.1"/>
    <property type="molecule type" value="Genomic_DNA"/>
</dbReference>
<dbReference type="RefSeq" id="WP_011337411.1">
    <property type="nucleotide sequence ID" value="NC_009049.1"/>
</dbReference>
<dbReference type="SMR" id="A3PIG2"/>
<dbReference type="GeneID" id="67446115"/>
<dbReference type="KEGG" id="rsh:Rsph17029_1017"/>
<dbReference type="HOGENOM" id="CLU_080904_3_0_5"/>
<dbReference type="UniPathway" id="UPA00602">
    <property type="reaction ID" value="UER00658"/>
</dbReference>
<dbReference type="UniPathway" id="UPA00909">
    <property type="reaction ID" value="UER00887"/>
</dbReference>
<dbReference type="GO" id="GO:0005886">
    <property type="term" value="C:plasma membrane"/>
    <property type="evidence" value="ECO:0007669"/>
    <property type="project" value="UniProtKB-SubCell"/>
</dbReference>
<dbReference type="GO" id="GO:0052657">
    <property type="term" value="F:guanine phosphoribosyltransferase activity"/>
    <property type="evidence" value="ECO:0007669"/>
    <property type="project" value="RHEA"/>
</dbReference>
<dbReference type="GO" id="GO:0004422">
    <property type="term" value="F:hypoxanthine phosphoribosyltransferase activity"/>
    <property type="evidence" value="ECO:0007669"/>
    <property type="project" value="RHEA"/>
</dbReference>
<dbReference type="GO" id="GO:0000287">
    <property type="term" value="F:magnesium ion binding"/>
    <property type="evidence" value="ECO:0007669"/>
    <property type="project" value="UniProtKB-UniRule"/>
</dbReference>
<dbReference type="GO" id="GO:0000310">
    <property type="term" value="F:xanthine phosphoribosyltransferase activity"/>
    <property type="evidence" value="ECO:0007669"/>
    <property type="project" value="UniProtKB-UniRule"/>
</dbReference>
<dbReference type="GO" id="GO:0032263">
    <property type="term" value="P:GMP salvage"/>
    <property type="evidence" value="ECO:0007669"/>
    <property type="project" value="UniProtKB-UniRule"/>
</dbReference>
<dbReference type="GO" id="GO:0006166">
    <property type="term" value="P:purine ribonucleoside salvage"/>
    <property type="evidence" value="ECO:0007669"/>
    <property type="project" value="UniProtKB-KW"/>
</dbReference>
<dbReference type="GO" id="GO:0032265">
    <property type="term" value="P:XMP salvage"/>
    <property type="evidence" value="ECO:0007669"/>
    <property type="project" value="UniProtKB-UniRule"/>
</dbReference>
<dbReference type="CDD" id="cd06223">
    <property type="entry name" value="PRTases_typeI"/>
    <property type="match status" value="1"/>
</dbReference>
<dbReference type="Gene3D" id="3.40.50.2020">
    <property type="match status" value="1"/>
</dbReference>
<dbReference type="HAMAP" id="MF_01903">
    <property type="entry name" value="XGPRT"/>
    <property type="match status" value="1"/>
</dbReference>
<dbReference type="InterPro" id="IPR000836">
    <property type="entry name" value="PRibTrfase_dom"/>
</dbReference>
<dbReference type="InterPro" id="IPR029057">
    <property type="entry name" value="PRTase-like"/>
</dbReference>
<dbReference type="InterPro" id="IPR023747">
    <property type="entry name" value="Xanthine_Guanine_PRibTrfase"/>
</dbReference>
<dbReference type="NCBIfam" id="NF006613">
    <property type="entry name" value="PRK09177.1"/>
    <property type="match status" value="1"/>
</dbReference>
<dbReference type="PANTHER" id="PTHR39563">
    <property type="entry name" value="XANTHINE PHOSPHORIBOSYLTRANSFERASE"/>
    <property type="match status" value="1"/>
</dbReference>
<dbReference type="PANTHER" id="PTHR39563:SF1">
    <property type="entry name" value="XANTHINE-GUANINE PHOSPHORIBOSYLTRANSFERASE"/>
    <property type="match status" value="1"/>
</dbReference>
<dbReference type="Pfam" id="PF00156">
    <property type="entry name" value="Pribosyltran"/>
    <property type="match status" value="1"/>
</dbReference>
<dbReference type="SUPFAM" id="SSF53271">
    <property type="entry name" value="PRTase-like"/>
    <property type="match status" value="1"/>
</dbReference>
<dbReference type="PROSITE" id="PS00103">
    <property type="entry name" value="PUR_PYR_PR_TRANSFER"/>
    <property type="match status" value="1"/>
</dbReference>
<protein>
    <recommendedName>
        <fullName evidence="1">Xanthine-guanine phosphoribosyltransferase</fullName>
        <shortName evidence="1">XGPRT</shortName>
        <ecNumber evidence="1">2.4.2.-</ecNumber>
        <ecNumber evidence="1">2.4.2.22</ecNumber>
    </recommendedName>
    <alternativeName>
        <fullName evidence="1">Xanthine phosphoribosyltransferase</fullName>
    </alternativeName>
</protein>
<name>XGPT_CERS1</name>
<comment type="function">
    <text evidence="1">Purine salvage pathway enzyme that catalyzes the transfer of the ribosyl-5-phosphate group from 5-phospho-alpha-D-ribose 1-diphosphate (PRPP) to the N9 position of the 6-oxopurines guanine and xanthine to form the corresponding ribonucleotides GMP (guanosine 5'-monophosphate) and XMP (xanthosine 5'-monophosphate), with the release of PPi. To a lesser extent, also acts on hypoxanthine.</text>
</comment>
<comment type="catalytic activity">
    <reaction evidence="1">
        <text>GMP + diphosphate = guanine + 5-phospho-alpha-D-ribose 1-diphosphate</text>
        <dbReference type="Rhea" id="RHEA:25424"/>
        <dbReference type="ChEBI" id="CHEBI:16235"/>
        <dbReference type="ChEBI" id="CHEBI:33019"/>
        <dbReference type="ChEBI" id="CHEBI:58017"/>
        <dbReference type="ChEBI" id="CHEBI:58115"/>
    </reaction>
    <physiologicalReaction direction="right-to-left" evidence="1">
        <dbReference type="Rhea" id="RHEA:25426"/>
    </physiologicalReaction>
</comment>
<comment type="catalytic activity">
    <reaction evidence="1">
        <text>XMP + diphosphate = xanthine + 5-phospho-alpha-D-ribose 1-diphosphate</text>
        <dbReference type="Rhea" id="RHEA:10800"/>
        <dbReference type="ChEBI" id="CHEBI:17712"/>
        <dbReference type="ChEBI" id="CHEBI:33019"/>
        <dbReference type="ChEBI" id="CHEBI:57464"/>
        <dbReference type="ChEBI" id="CHEBI:58017"/>
        <dbReference type="EC" id="2.4.2.22"/>
    </reaction>
    <physiologicalReaction direction="right-to-left" evidence="1">
        <dbReference type="Rhea" id="RHEA:10802"/>
    </physiologicalReaction>
</comment>
<comment type="catalytic activity">
    <reaction evidence="1">
        <text>IMP + diphosphate = hypoxanthine + 5-phospho-alpha-D-ribose 1-diphosphate</text>
        <dbReference type="Rhea" id="RHEA:17973"/>
        <dbReference type="ChEBI" id="CHEBI:17368"/>
        <dbReference type="ChEBI" id="CHEBI:33019"/>
        <dbReference type="ChEBI" id="CHEBI:58017"/>
        <dbReference type="ChEBI" id="CHEBI:58053"/>
    </reaction>
    <physiologicalReaction direction="right-to-left" evidence="1">
        <dbReference type="Rhea" id="RHEA:17975"/>
    </physiologicalReaction>
</comment>
<comment type="cofactor">
    <cofactor evidence="1">
        <name>Mg(2+)</name>
        <dbReference type="ChEBI" id="CHEBI:18420"/>
    </cofactor>
</comment>
<comment type="pathway">
    <text evidence="1">Purine metabolism; GMP biosynthesis via salvage pathway; GMP from guanine: step 1/1.</text>
</comment>
<comment type="pathway">
    <text evidence="1">Purine metabolism; XMP biosynthesis via salvage pathway; XMP from xanthine: step 1/1.</text>
</comment>
<comment type="subunit">
    <text evidence="1">Homotetramer.</text>
</comment>
<comment type="subcellular location">
    <subcellularLocation>
        <location evidence="1">Cell inner membrane</location>
        <topology evidence="1">Peripheral membrane protein</topology>
    </subcellularLocation>
</comment>
<comment type="similarity">
    <text evidence="1">Belongs to the purine/pyrimidine phosphoribosyltransferase family. XGPT subfamily.</text>
</comment>
<accession>A3PIG2</accession>
<evidence type="ECO:0000255" key="1">
    <source>
        <dbReference type="HAMAP-Rule" id="MF_01903"/>
    </source>
</evidence>
<keyword id="KW-0997">Cell inner membrane</keyword>
<keyword id="KW-1003">Cell membrane</keyword>
<keyword id="KW-0328">Glycosyltransferase</keyword>
<keyword id="KW-0460">Magnesium</keyword>
<keyword id="KW-0472">Membrane</keyword>
<keyword id="KW-0479">Metal-binding</keyword>
<keyword id="KW-0660">Purine salvage</keyword>
<keyword id="KW-0808">Transferase</keyword>
<proteinExistence type="inferred from homology"/>
<sequence length="167" mass="19008">MKERLPHEKGFHVSWDQIHRDSRALAWRLDGQGPDNGSWRAVVGITRGGLVPAMIVSRELDIRTVDTISVKSYNWQEQQAPTVIKAPQAELMGDGHGILIVDDLVDSGKTLELVRTLYPRAHFATVYAKPSGRPMVDTYITEVSQDTWIFFPWDMALQYVEPYRGRD</sequence>
<feature type="chain" id="PRO_1000070612" description="Xanthine-guanine phosphoribosyltransferase">
    <location>
        <begin position="1"/>
        <end position="167"/>
    </location>
</feature>
<feature type="binding site" evidence="1">
    <location>
        <begin position="47"/>
        <end position="48"/>
    </location>
    <ligand>
        <name>5-phospho-alpha-D-ribose 1-diphosphate</name>
        <dbReference type="ChEBI" id="CHEBI:58017"/>
    </ligand>
</feature>
<feature type="binding site" evidence="1">
    <location>
        <position position="79"/>
    </location>
    <ligand>
        <name>5-phospho-alpha-D-ribose 1-diphosphate</name>
        <dbReference type="ChEBI" id="CHEBI:58017"/>
    </ligand>
</feature>
<feature type="binding site" evidence="1">
    <location>
        <position position="79"/>
    </location>
    <ligand>
        <name>GMP</name>
        <dbReference type="ChEBI" id="CHEBI:58115"/>
    </ligand>
</feature>
<feature type="binding site" evidence="1">
    <location>
        <begin position="102"/>
        <end position="110"/>
    </location>
    <ligand>
        <name>5-phospho-alpha-D-ribose 1-diphosphate</name>
        <dbReference type="ChEBI" id="CHEBI:58017"/>
    </ligand>
</feature>
<feature type="binding site" evidence="1">
    <location>
        <position position="103"/>
    </location>
    <ligand>
        <name>Mg(2+)</name>
        <dbReference type="ChEBI" id="CHEBI:18420"/>
    </ligand>
</feature>
<feature type="binding site" evidence="1">
    <location>
        <begin position="106"/>
        <end position="110"/>
    </location>
    <ligand>
        <name>GMP</name>
        <dbReference type="ChEBI" id="CHEBI:58115"/>
    </ligand>
</feature>
<feature type="binding site" evidence="1">
    <location>
        <position position="106"/>
    </location>
    <ligand>
        <name>guanine</name>
        <dbReference type="ChEBI" id="CHEBI:16235"/>
    </ligand>
</feature>
<feature type="binding site" evidence="1">
    <location>
        <position position="106"/>
    </location>
    <ligand>
        <name>xanthine</name>
        <dbReference type="ChEBI" id="CHEBI:17712"/>
    </ligand>
</feature>
<feature type="binding site" evidence="1">
    <location>
        <begin position="148"/>
        <end position="149"/>
    </location>
    <ligand>
        <name>GMP</name>
        <dbReference type="ChEBI" id="CHEBI:58115"/>
    </ligand>
</feature>
<feature type="binding site" evidence="1">
    <location>
        <position position="149"/>
    </location>
    <ligand>
        <name>guanine</name>
        <dbReference type="ChEBI" id="CHEBI:16235"/>
    </ligand>
</feature>
<feature type="binding site" evidence="1">
    <location>
        <position position="149"/>
    </location>
    <ligand>
        <name>xanthine</name>
        <dbReference type="ChEBI" id="CHEBI:17712"/>
    </ligand>
</feature>
<organism>
    <name type="scientific">Cereibacter sphaeroides (strain ATCC 17029 / ATH 2.4.9)</name>
    <name type="common">Rhodobacter sphaeroides</name>
    <dbReference type="NCBI Taxonomy" id="349101"/>
    <lineage>
        <taxon>Bacteria</taxon>
        <taxon>Pseudomonadati</taxon>
        <taxon>Pseudomonadota</taxon>
        <taxon>Alphaproteobacteria</taxon>
        <taxon>Rhodobacterales</taxon>
        <taxon>Paracoccaceae</taxon>
        <taxon>Cereibacter</taxon>
    </lineage>
</organism>
<gene>
    <name evidence="1" type="primary">gpt</name>
    <name type="ordered locus">Rsph17029_1017</name>
</gene>
<reference key="1">
    <citation type="submission" date="2007-02" db="EMBL/GenBank/DDBJ databases">
        <title>Complete sequence of chromosome 1 of Rhodobacter sphaeroides ATCC 17029.</title>
        <authorList>
            <person name="Copeland A."/>
            <person name="Lucas S."/>
            <person name="Lapidus A."/>
            <person name="Barry K."/>
            <person name="Detter J.C."/>
            <person name="Glavina del Rio T."/>
            <person name="Hammon N."/>
            <person name="Israni S."/>
            <person name="Dalin E."/>
            <person name="Tice H."/>
            <person name="Pitluck S."/>
            <person name="Kiss H."/>
            <person name="Brettin T."/>
            <person name="Bruce D."/>
            <person name="Han C."/>
            <person name="Tapia R."/>
            <person name="Gilna P."/>
            <person name="Schmutz J."/>
            <person name="Larimer F."/>
            <person name="Land M."/>
            <person name="Hauser L."/>
            <person name="Kyrpides N."/>
            <person name="Mikhailova N."/>
            <person name="Richardson P."/>
            <person name="Mackenzie C."/>
            <person name="Choudhary M."/>
            <person name="Donohue T.J."/>
            <person name="Kaplan S."/>
        </authorList>
    </citation>
    <scope>NUCLEOTIDE SEQUENCE [LARGE SCALE GENOMIC DNA]</scope>
    <source>
        <strain>ATCC 17029 / ATH 2.4.9</strain>
    </source>
</reference>